<organism>
    <name type="scientific">Synechococcus sp. (strain CC9902)</name>
    <dbReference type="NCBI Taxonomy" id="316279"/>
    <lineage>
        <taxon>Bacteria</taxon>
        <taxon>Bacillati</taxon>
        <taxon>Cyanobacteriota</taxon>
        <taxon>Cyanophyceae</taxon>
        <taxon>Synechococcales</taxon>
        <taxon>Synechococcaceae</taxon>
        <taxon>Synechococcus</taxon>
    </lineage>
</organism>
<dbReference type="EMBL" id="CP000097">
    <property type="protein sequence ID" value="ABB26934.1"/>
    <property type="molecule type" value="Genomic_DNA"/>
</dbReference>
<dbReference type="RefSeq" id="WP_011360729.1">
    <property type="nucleotide sequence ID" value="NC_007513.1"/>
</dbReference>
<dbReference type="SMR" id="Q3AW72"/>
<dbReference type="STRING" id="316279.Syncc9902_1976"/>
<dbReference type="KEGG" id="sye:Syncc9902_1976"/>
<dbReference type="eggNOG" id="COG0099">
    <property type="taxonomic scope" value="Bacteria"/>
</dbReference>
<dbReference type="HOGENOM" id="CLU_103849_1_2_3"/>
<dbReference type="OrthoDB" id="9803610at2"/>
<dbReference type="Proteomes" id="UP000002712">
    <property type="component" value="Chromosome"/>
</dbReference>
<dbReference type="GO" id="GO:0005829">
    <property type="term" value="C:cytosol"/>
    <property type="evidence" value="ECO:0007669"/>
    <property type="project" value="TreeGrafter"/>
</dbReference>
<dbReference type="GO" id="GO:0015935">
    <property type="term" value="C:small ribosomal subunit"/>
    <property type="evidence" value="ECO:0007669"/>
    <property type="project" value="TreeGrafter"/>
</dbReference>
<dbReference type="GO" id="GO:0019843">
    <property type="term" value="F:rRNA binding"/>
    <property type="evidence" value="ECO:0007669"/>
    <property type="project" value="UniProtKB-UniRule"/>
</dbReference>
<dbReference type="GO" id="GO:0003735">
    <property type="term" value="F:structural constituent of ribosome"/>
    <property type="evidence" value="ECO:0007669"/>
    <property type="project" value="InterPro"/>
</dbReference>
<dbReference type="GO" id="GO:0000049">
    <property type="term" value="F:tRNA binding"/>
    <property type="evidence" value="ECO:0007669"/>
    <property type="project" value="UniProtKB-UniRule"/>
</dbReference>
<dbReference type="GO" id="GO:0006412">
    <property type="term" value="P:translation"/>
    <property type="evidence" value="ECO:0007669"/>
    <property type="project" value="UniProtKB-UniRule"/>
</dbReference>
<dbReference type="FunFam" id="1.10.8.50:FF:000001">
    <property type="entry name" value="30S ribosomal protein S13"/>
    <property type="match status" value="1"/>
</dbReference>
<dbReference type="Gene3D" id="1.10.8.50">
    <property type="match status" value="1"/>
</dbReference>
<dbReference type="Gene3D" id="4.10.910.10">
    <property type="entry name" value="30s ribosomal protein s13, domain 2"/>
    <property type="match status" value="1"/>
</dbReference>
<dbReference type="HAMAP" id="MF_01315">
    <property type="entry name" value="Ribosomal_uS13"/>
    <property type="match status" value="1"/>
</dbReference>
<dbReference type="InterPro" id="IPR027437">
    <property type="entry name" value="Rbsml_uS13_C"/>
</dbReference>
<dbReference type="InterPro" id="IPR001892">
    <property type="entry name" value="Ribosomal_uS13"/>
</dbReference>
<dbReference type="InterPro" id="IPR010979">
    <property type="entry name" value="Ribosomal_uS13-like_H2TH"/>
</dbReference>
<dbReference type="InterPro" id="IPR019980">
    <property type="entry name" value="Ribosomal_uS13_bac-type"/>
</dbReference>
<dbReference type="InterPro" id="IPR018269">
    <property type="entry name" value="Ribosomal_uS13_CS"/>
</dbReference>
<dbReference type="NCBIfam" id="TIGR03631">
    <property type="entry name" value="uS13_bact"/>
    <property type="match status" value="1"/>
</dbReference>
<dbReference type="PANTHER" id="PTHR10871">
    <property type="entry name" value="30S RIBOSOMAL PROTEIN S13/40S RIBOSOMAL PROTEIN S18"/>
    <property type="match status" value="1"/>
</dbReference>
<dbReference type="PANTHER" id="PTHR10871:SF1">
    <property type="entry name" value="SMALL RIBOSOMAL SUBUNIT PROTEIN US13M"/>
    <property type="match status" value="1"/>
</dbReference>
<dbReference type="Pfam" id="PF00416">
    <property type="entry name" value="Ribosomal_S13"/>
    <property type="match status" value="1"/>
</dbReference>
<dbReference type="PIRSF" id="PIRSF002134">
    <property type="entry name" value="Ribosomal_S13"/>
    <property type="match status" value="1"/>
</dbReference>
<dbReference type="SUPFAM" id="SSF46946">
    <property type="entry name" value="S13-like H2TH domain"/>
    <property type="match status" value="1"/>
</dbReference>
<dbReference type="PROSITE" id="PS00646">
    <property type="entry name" value="RIBOSOMAL_S13_1"/>
    <property type="match status" value="1"/>
</dbReference>
<dbReference type="PROSITE" id="PS50159">
    <property type="entry name" value="RIBOSOMAL_S13_2"/>
    <property type="match status" value="1"/>
</dbReference>
<accession>Q3AW72</accession>
<gene>
    <name evidence="1" type="primary">rpsM</name>
    <name evidence="1" type="synonym">rps13</name>
    <name type="ordered locus">Syncc9902_1976</name>
</gene>
<reference key="1">
    <citation type="submission" date="2005-08" db="EMBL/GenBank/DDBJ databases">
        <title>Complete sequence of Synechococcus sp. CC9902.</title>
        <authorList>
            <person name="Copeland A."/>
            <person name="Lucas S."/>
            <person name="Lapidus A."/>
            <person name="Barry K."/>
            <person name="Detter J.C."/>
            <person name="Glavina T."/>
            <person name="Hammon N."/>
            <person name="Israni S."/>
            <person name="Pitluck S."/>
            <person name="Martinez M."/>
            <person name="Schmutz J."/>
            <person name="Larimer F."/>
            <person name="Land M."/>
            <person name="Kyrpides N."/>
            <person name="Ivanova N."/>
            <person name="Richardson P."/>
        </authorList>
    </citation>
    <scope>NUCLEOTIDE SEQUENCE [LARGE SCALE GENOMIC DNA]</scope>
    <source>
        <strain>CC9902</strain>
    </source>
</reference>
<feature type="chain" id="PRO_0000306730" description="Small ribosomal subunit protein uS13">
    <location>
        <begin position="1"/>
        <end position="121"/>
    </location>
</feature>
<feature type="region of interest" description="Disordered" evidence="2">
    <location>
        <begin position="97"/>
        <end position="121"/>
    </location>
</feature>
<feature type="compositionally biased region" description="Basic residues" evidence="2">
    <location>
        <begin position="100"/>
        <end position="121"/>
    </location>
</feature>
<proteinExistence type="inferred from homology"/>
<protein>
    <recommendedName>
        <fullName evidence="1">Small ribosomal subunit protein uS13</fullName>
    </recommendedName>
    <alternativeName>
        <fullName evidence="3">30S ribosomal protein S13</fullName>
    </alternativeName>
</protein>
<evidence type="ECO:0000255" key="1">
    <source>
        <dbReference type="HAMAP-Rule" id="MF_01315"/>
    </source>
</evidence>
<evidence type="ECO:0000256" key="2">
    <source>
        <dbReference type="SAM" id="MobiDB-lite"/>
    </source>
</evidence>
<evidence type="ECO:0000305" key="3"/>
<sequence>MARIAGVDIPRDKRVEVSLTYIYGIGLTRAKAILAKAGVNPDIRVKDLEDGDIQKLRGATEAFTIEGDLRRQEGMALKRLQDIGCVRGRRHRMSLPVRGQRTRTNARTRRGARKTVAGKKK</sequence>
<name>RS13_SYNS9</name>
<keyword id="KW-1185">Reference proteome</keyword>
<keyword id="KW-0687">Ribonucleoprotein</keyword>
<keyword id="KW-0689">Ribosomal protein</keyword>
<keyword id="KW-0694">RNA-binding</keyword>
<keyword id="KW-0699">rRNA-binding</keyword>
<keyword id="KW-0820">tRNA-binding</keyword>
<comment type="function">
    <text evidence="1">Located at the top of the head of the 30S subunit, it contacts several helices of the 16S rRNA. In the 70S ribosome it contacts the 23S rRNA (bridge B1a) and protein L5 of the 50S subunit (bridge B1b), connecting the 2 subunits; these bridges are implicated in subunit movement. Contacts the tRNAs in the A and P-sites.</text>
</comment>
<comment type="subunit">
    <text evidence="1">Part of the 30S ribosomal subunit. Forms a loose heterodimer with protein S19. Forms two bridges to the 50S subunit in the 70S ribosome.</text>
</comment>
<comment type="similarity">
    <text evidence="1">Belongs to the universal ribosomal protein uS13 family.</text>
</comment>